<gene>
    <name evidence="1" type="primary">guaA</name>
    <name type="ordered locus">tll2418</name>
</gene>
<organism>
    <name type="scientific">Thermosynechococcus vestitus (strain NIES-2133 / IAM M-273 / BP-1)</name>
    <dbReference type="NCBI Taxonomy" id="197221"/>
    <lineage>
        <taxon>Bacteria</taxon>
        <taxon>Bacillati</taxon>
        <taxon>Cyanobacteriota</taxon>
        <taxon>Cyanophyceae</taxon>
        <taxon>Acaryochloridales</taxon>
        <taxon>Thermosynechococcaceae</taxon>
        <taxon>Thermosynechococcus</taxon>
    </lineage>
</organism>
<proteinExistence type="inferred from homology"/>
<protein>
    <recommendedName>
        <fullName evidence="1">GMP synthase [glutamine-hydrolyzing]</fullName>
        <ecNumber evidence="1">6.3.5.2</ecNumber>
    </recommendedName>
    <alternativeName>
        <fullName evidence="1">GMP synthetase</fullName>
    </alternativeName>
    <alternativeName>
        <fullName evidence="1">Glutamine amidotransferase</fullName>
    </alternativeName>
</protein>
<feature type="chain" id="PRO_0000140194" description="GMP synthase [glutamine-hydrolyzing]">
    <location>
        <begin position="1"/>
        <end position="535"/>
    </location>
</feature>
<feature type="domain" description="Glutamine amidotransferase type-1" evidence="1">
    <location>
        <begin position="21"/>
        <end position="211"/>
    </location>
</feature>
<feature type="domain" description="GMPS ATP-PPase" evidence="1">
    <location>
        <begin position="212"/>
        <end position="410"/>
    </location>
</feature>
<feature type="active site" description="Nucleophile" evidence="1">
    <location>
        <position position="98"/>
    </location>
</feature>
<feature type="active site" evidence="1">
    <location>
        <position position="185"/>
    </location>
</feature>
<feature type="active site" evidence="1">
    <location>
        <position position="187"/>
    </location>
</feature>
<feature type="binding site" evidence="1">
    <location>
        <begin position="239"/>
        <end position="245"/>
    </location>
    <ligand>
        <name>ATP</name>
        <dbReference type="ChEBI" id="CHEBI:30616"/>
    </ligand>
</feature>
<evidence type="ECO:0000255" key="1">
    <source>
        <dbReference type="HAMAP-Rule" id="MF_00344"/>
    </source>
</evidence>
<reference key="1">
    <citation type="journal article" date="2002" name="DNA Res.">
        <title>Complete genome structure of the thermophilic cyanobacterium Thermosynechococcus elongatus BP-1.</title>
        <authorList>
            <person name="Nakamura Y."/>
            <person name="Kaneko T."/>
            <person name="Sato S."/>
            <person name="Ikeuchi M."/>
            <person name="Katoh H."/>
            <person name="Sasamoto S."/>
            <person name="Watanabe A."/>
            <person name="Iriguchi M."/>
            <person name="Kawashima K."/>
            <person name="Kimura T."/>
            <person name="Kishida Y."/>
            <person name="Kiyokawa C."/>
            <person name="Kohara M."/>
            <person name="Matsumoto M."/>
            <person name="Matsuno A."/>
            <person name="Nakazaki N."/>
            <person name="Shimpo S."/>
            <person name="Sugimoto M."/>
            <person name="Takeuchi C."/>
            <person name="Yamada M."/>
            <person name="Tabata S."/>
        </authorList>
    </citation>
    <scope>NUCLEOTIDE SEQUENCE [LARGE SCALE GENOMIC DNA]</scope>
    <source>
        <strain>NIES-2133 / IAM M-273 / BP-1</strain>
    </source>
</reference>
<accession>Q8DGA5</accession>
<comment type="function">
    <text evidence="1">Catalyzes the synthesis of GMP from XMP.</text>
</comment>
<comment type="catalytic activity">
    <reaction evidence="1">
        <text>XMP + L-glutamine + ATP + H2O = GMP + L-glutamate + AMP + diphosphate + 2 H(+)</text>
        <dbReference type="Rhea" id="RHEA:11680"/>
        <dbReference type="ChEBI" id="CHEBI:15377"/>
        <dbReference type="ChEBI" id="CHEBI:15378"/>
        <dbReference type="ChEBI" id="CHEBI:29985"/>
        <dbReference type="ChEBI" id="CHEBI:30616"/>
        <dbReference type="ChEBI" id="CHEBI:33019"/>
        <dbReference type="ChEBI" id="CHEBI:57464"/>
        <dbReference type="ChEBI" id="CHEBI:58115"/>
        <dbReference type="ChEBI" id="CHEBI:58359"/>
        <dbReference type="ChEBI" id="CHEBI:456215"/>
        <dbReference type="EC" id="6.3.5.2"/>
    </reaction>
</comment>
<comment type="pathway">
    <text evidence="1">Purine metabolism; GMP biosynthesis; GMP from XMP (L-Gln route): step 1/1.</text>
</comment>
<comment type="subunit">
    <text evidence="1">Homodimer.</text>
</comment>
<dbReference type="EC" id="6.3.5.2" evidence="1"/>
<dbReference type="EMBL" id="BA000039">
    <property type="protein sequence ID" value="BAC09970.1"/>
    <property type="molecule type" value="Genomic_DNA"/>
</dbReference>
<dbReference type="RefSeq" id="NP_683208.1">
    <property type="nucleotide sequence ID" value="NC_004113.1"/>
</dbReference>
<dbReference type="RefSeq" id="WP_011058250.1">
    <property type="nucleotide sequence ID" value="NC_004113.1"/>
</dbReference>
<dbReference type="SMR" id="Q8DGA5"/>
<dbReference type="STRING" id="197221.gene:10749038"/>
<dbReference type="EnsemblBacteria" id="BAC09970">
    <property type="protein sequence ID" value="BAC09970"/>
    <property type="gene ID" value="BAC09970"/>
</dbReference>
<dbReference type="KEGG" id="tel:tll2418"/>
<dbReference type="PATRIC" id="fig|197221.4.peg.2540"/>
<dbReference type="eggNOG" id="COG0518">
    <property type="taxonomic scope" value="Bacteria"/>
</dbReference>
<dbReference type="eggNOG" id="COG0519">
    <property type="taxonomic scope" value="Bacteria"/>
</dbReference>
<dbReference type="UniPathway" id="UPA00189">
    <property type="reaction ID" value="UER00296"/>
</dbReference>
<dbReference type="Proteomes" id="UP000000440">
    <property type="component" value="Chromosome"/>
</dbReference>
<dbReference type="GO" id="GO:0005829">
    <property type="term" value="C:cytosol"/>
    <property type="evidence" value="ECO:0007669"/>
    <property type="project" value="TreeGrafter"/>
</dbReference>
<dbReference type="GO" id="GO:0005524">
    <property type="term" value="F:ATP binding"/>
    <property type="evidence" value="ECO:0007669"/>
    <property type="project" value="UniProtKB-UniRule"/>
</dbReference>
<dbReference type="GO" id="GO:0003921">
    <property type="term" value="F:GMP synthase activity"/>
    <property type="evidence" value="ECO:0007669"/>
    <property type="project" value="InterPro"/>
</dbReference>
<dbReference type="CDD" id="cd01742">
    <property type="entry name" value="GATase1_GMP_Synthase"/>
    <property type="match status" value="1"/>
</dbReference>
<dbReference type="CDD" id="cd01997">
    <property type="entry name" value="GMP_synthase_C"/>
    <property type="match status" value="1"/>
</dbReference>
<dbReference type="FunFam" id="3.30.300.10:FF:000002">
    <property type="entry name" value="GMP synthase [glutamine-hydrolyzing]"/>
    <property type="match status" value="1"/>
</dbReference>
<dbReference type="FunFam" id="3.40.50.620:FF:000001">
    <property type="entry name" value="GMP synthase [glutamine-hydrolyzing]"/>
    <property type="match status" value="1"/>
</dbReference>
<dbReference type="FunFam" id="3.40.50.880:FF:000001">
    <property type="entry name" value="GMP synthase [glutamine-hydrolyzing]"/>
    <property type="match status" value="1"/>
</dbReference>
<dbReference type="Gene3D" id="3.30.300.10">
    <property type="match status" value="1"/>
</dbReference>
<dbReference type="Gene3D" id="3.40.50.880">
    <property type="match status" value="1"/>
</dbReference>
<dbReference type="Gene3D" id="3.40.50.620">
    <property type="entry name" value="HUPs"/>
    <property type="match status" value="1"/>
</dbReference>
<dbReference type="HAMAP" id="MF_00344">
    <property type="entry name" value="GMP_synthase"/>
    <property type="match status" value="1"/>
</dbReference>
<dbReference type="InterPro" id="IPR029062">
    <property type="entry name" value="Class_I_gatase-like"/>
</dbReference>
<dbReference type="InterPro" id="IPR017926">
    <property type="entry name" value="GATASE"/>
</dbReference>
<dbReference type="InterPro" id="IPR001674">
    <property type="entry name" value="GMP_synth_C"/>
</dbReference>
<dbReference type="InterPro" id="IPR004739">
    <property type="entry name" value="GMP_synth_GATase"/>
</dbReference>
<dbReference type="InterPro" id="IPR022955">
    <property type="entry name" value="GMP_synthase"/>
</dbReference>
<dbReference type="InterPro" id="IPR025777">
    <property type="entry name" value="GMPS_ATP_PPase_dom"/>
</dbReference>
<dbReference type="InterPro" id="IPR022310">
    <property type="entry name" value="NAD/GMP_synthase"/>
</dbReference>
<dbReference type="InterPro" id="IPR014729">
    <property type="entry name" value="Rossmann-like_a/b/a_fold"/>
</dbReference>
<dbReference type="NCBIfam" id="TIGR00884">
    <property type="entry name" value="guaA_Cterm"/>
    <property type="match status" value="1"/>
</dbReference>
<dbReference type="NCBIfam" id="TIGR00888">
    <property type="entry name" value="guaA_Nterm"/>
    <property type="match status" value="1"/>
</dbReference>
<dbReference type="NCBIfam" id="NF000848">
    <property type="entry name" value="PRK00074.1"/>
    <property type="match status" value="1"/>
</dbReference>
<dbReference type="PANTHER" id="PTHR11922:SF2">
    <property type="entry name" value="GMP SYNTHASE [GLUTAMINE-HYDROLYZING]"/>
    <property type="match status" value="1"/>
</dbReference>
<dbReference type="PANTHER" id="PTHR11922">
    <property type="entry name" value="GMP SYNTHASE-RELATED"/>
    <property type="match status" value="1"/>
</dbReference>
<dbReference type="Pfam" id="PF00117">
    <property type="entry name" value="GATase"/>
    <property type="match status" value="1"/>
</dbReference>
<dbReference type="Pfam" id="PF00958">
    <property type="entry name" value="GMP_synt_C"/>
    <property type="match status" value="1"/>
</dbReference>
<dbReference type="Pfam" id="PF02540">
    <property type="entry name" value="NAD_synthase"/>
    <property type="match status" value="1"/>
</dbReference>
<dbReference type="PRINTS" id="PR00097">
    <property type="entry name" value="ANTSNTHASEII"/>
</dbReference>
<dbReference type="PRINTS" id="PR00099">
    <property type="entry name" value="CPSGATASE"/>
</dbReference>
<dbReference type="PRINTS" id="PR00096">
    <property type="entry name" value="GATASE"/>
</dbReference>
<dbReference type="SUPFAM" id="SSF52402">
    <property type="entry name" value="Adenine nucleotide alpha hydrolases-like"/>
    <property type="match status" value="1"/>
</dbReference>
<dbReference type="SUPFAM" id="SSF52317">
    <property type="entry name" value="Class I glutamine amidotransferase-like"/>
    <property type="match status" value="1"/>
</dbReference>
<dbReference type="SUPFAM" id="SSF54810">
    <property type="entry name" value="GMP synthetase C-terminal dimerisation domain"/>
    <property type="match status" value="1"/>
</dbReference>
<dbReference type="PROSITE" id="PS51273">
    <property type="entry name" value="GATASE_TYPE_1"/>
    <property type="match status" value="1"/>
</dbReference>
<dbReference type="PROSITE" id="PS51553">
    <property type="entry name" value="GMPS_ATP_PPASE"/>
    <property type="match status" value="1"/>
</dbReference>
<name>GUAA_THEVB</name>
<keyword id="KW-0067">ATP-binding</keyword>
<keyword id="KW-0315">Glutamine amidotransferase</keyword>
<keyword id="KW-0332">GMP biosynthesis</keyword>
<keyword id="KW-0436">Ligase</keyword>
<keyword id="KW-0547">Nucleotide-binding</keyword>
<keyword id="KW-0658">Purine biosynthesis</keyword>
<keyword id="KW-1185">Reference proteome</keyword>
<sequence>MTHSTLHQPDTATGQGLQRQLIVILDFGSQYSELIARRIRETQVYSEVISYRTTAEQLAQLAPKGIILSGGPNSVYDENAPQCDPEIWNLGIPILGVCYGMQLMVQQLGGTVERAIAGEYGKAALFIDDPTDLLTNVEQETIMWMSHGDSVTELPPGFRVLAHTDNTPIAAIAHPERKLYGVQFHPEVVHSVGGIALIRNFVYHICDCEPTWTTAAFVEEAIREVRAKVGDKRVLLALSGGVDSSTLAFLLHRAIGDQLTCMFIDQGFMRKGEPERLLKLFQEQFHIKVEYVNARDRFLAQLVGVTDPEEKRKRIGHEFIRVFEEESQRLGPFDYLAQGTLYPDVIESANTNIDPQTGERVAVKIKSHHNVGGLPENLRFKLVEPLRKLFKDEVRQVGRSLGLPEEIVQRHPFPGPGLAIRILGEVTPERLEILRDADLIVRQEINRAQMYHELWQAFAVLLPIRTVGVMGDQRTYAYPVVLRFVTSEDGMTADWARVPYDLLERISNRIVNEVPGVNRVVYDITSKPPGTIEWE</sequence>